<comment type="function">
    <text evidence="4">Promotes apoptosis when overexpressed.</text>
</comment>
<comment type="subunit">
    <text evidence="1">Interacts with RBM40. Component of the U11/U12 snRNPs that are part of the U12-type spliceosome (By similarity).</text>
</comment>
<comment type="subcellular location">
    <subcellularLocation>
        <location evidence="5">Nucleus</location>
    </subcellularLocation>
</comment>
<comment type="tissue specificity">
    <text>Highly expressed in testis, thymus and lymph nodes. Detected at low levels in embryonic stem cells.</text>
</comment>
<comment type="induction">
    <text>Upon induction of apoptosis in embryonic stem cells by treatment with dexamethasone, staurosporine or C2-ceramide.</text>
</comment>
<feature type="chain" id="PRO_0000058270" description="Programmed cell death protein 7">
    <location>
        <begin position="1"/>
        <end position="482"/>
    </location>
</feature>
<feature type="region of interest" description="Disordered" evidence="3">
    <location>
        <begin position="1"/>
        <end position="136"/>
    </location>
</feature>
<feature type="region of interest" description="Disordered" evidence="3">
    <location>
        <begin position="151"/>
        <end position="170"/>
    </location>
</feature>
<feature type="coiled-coil region" evidence="2">
    <location>
        <begin position="233"/>
        <end position="408"/>
    </location>
</feature>
<feature type="compositionally biased region" description="Pro residues" evidence="3">
    <location>
        <begin position="13"/>
        <end position="48"/>
    </location>
</feature>
<feature type="compositionally biased region" description="Low complexity" evidence="3">
    <location>
        <begin position="49"/>
        <end position="71"/>
    </location>
</feature>
<feature type="compositionally biased region" description="Pro residues" evidence="3">
    <location>
        <begin position="82"/>
        <end position="100"/>
    </location>
</feature>
<feature type="compositionally biased region" description="Pro residues" evidence="3">
    <location>
        <begin position="109"/>
        <end position="130"/>
    </location>
</feature>
<feature type="compositionally biased region" description="Low complexity" evidence="3">
    <location>
        <begin position="151"/>
        <end position="168"/>
    </location>
</feature>
<proteinExistence type="evidence at protein level"/>
<accession>Q9WTY1</accession>
<accession>Q8R5D9</accession>
<gene>
    <name type="primary">Pdcd7</name>
</gene>
<reference key="1">
    <citation type="journal article" date="1999" name="Nucleic Acids Res.">
        <title>Characterization of a novel mouse cDNA, ES18, involved in apoptotic cell death of T-cells.</title>
        <authorList>
            <person name="Park E.J."/>
            <person name="Kim J.H."/>
            <person name="Seong R.H."/>
            <person name="Kim C.G."/>
            <person name="Park S.D."/>
            <person name="Hong S.H."/>
        </authorList>
    </citation>
    <scope>NUCLEOTIDE SEQUENCE [MRNA]</scope>
    <source>
        <tissue>Embryonic stem cell</tissue>
        <tissue>Thymus</tissue>
    </source>
</reference>
<reference key="2">
    <citation type="submission" date="2007-04" db="UniProtKB">
        <authorList>
            <person name="Lubec G."/>
            <person name="Kang S.U."/>
        </authorList>
    </citation>
    <scope>PROTEIN SEQUENCE OF 164-176</scope>
    <scope>IDENTIFICATION BY MASS SPECTROMETRY</scope>
    <source>
        <strain>C57BL/6J</strain>
        <tissue>Brain</tissue>
    </source>
</reference>
<reference key="3">
    <citation type="journal article" date="2004" name="Genome Res.">
        <title>The status, quality, and expansion of the NIH full-length cDNA project: the Mammalian Gene Collection (MGC).</title>
        <authorList>
            <consortium name="The MGC Project Team"/>
        </authorList>
    </citation>
    <scope>NUCLEOTIDE SEQUENCE [LARGE SCALE MRNA] OF 296-482</scope>
</reference>
<reference key="4">
    <citation type="journal article" date="1998" name="Mol. Membr. Biol.">
        <title>Molecular cloning, functional expression and chromosomal localization of a cDNA encoding a human Na+/nucleoside cotransporter (hCNT2) selective for purine nucleosides and uridine.</title>
        <authorList>
            <person name="Ritzel M.W.L."/>
            <person name="Yao S.Y.M."/>
            <person name="Ng A.M.L."/>
            <person name="Mackey J.R."/>
            <person name="Cass C.E."/>
            <person name="Young J.D."/>
        </authorList>
    </citation>
    <scope>FUNCTION</scope>
</reference>
<evidence type="ECO:0000250" key="1"/>
<evidence type="ECO:0000255" key="2"/>
<evidence type="ECO:0000256" key="3">
    <source>
        <dbReference type="SAM" id="MobiDB-lite"/>
    </source>
</evidence>
<evidence type="ECO:0000269" key="4">
    <source>
    </source>
</evidence>
<evidence type="ECO:0000305" key="5"/>
<name>PDCD7_MOUSE</name>
<keyword id="KW-0053">Apoptosis</keyword>
<keyword id="KW-0175">Coiled coil</keyword>
<keyword id="KW-0903">Direct protein sequencing</keyword>
<keyword id="KW-0539">Nucleus</keyword>
<keyword id="KW-1185">Reference proteome</keyword>
<protein>
    <recommendedName>
        <fullName>Programmed cell death protein 7</fullName>
    </recommendedName>
    <alternativeName>
        <fullName>ES18</fullName>
    </alternativeName>
</protein>
<dbReference type="EMBL" id="AF083929">
    <property type="protein sequence ID" value="AAD20240.1"/>
    <property type="molecule type" value="mRNA"/>
</dbReference>
<dbReference type="EMBL" id="BC022772">
    <property type="protein sequence ID" value="AAH22772.2"/>
    <property type="molecule type" value="mRNA"/>
</dbReference>
<dbReference type="SMR" id="Q9WTY1"/>
<dbReference type="FunCoup" id="Q9WTY1">
    <property type="interactions" value="1319"/>
</dbReference>
<dbReference type="STRING" id="10090.ENSMUSP00000035515"/>
<dbReference type="iPTMnet" id="Q9WTY1"/>
<dbReference type="PhosphoSitePlus" id="Q9WTY1"/>
<dbReference type="PaxDb" id="10090-ENSMUSP00000035515"/>
<dbReference type="ProteomicsDB" id="301778"/>
<dbReference type="AGR" id="MGI:1859170"/>
<dbReference type="MGI" id="MGI:1859170">
    <property type="gene designation" value="Pdcd7"/>
</dbReference>
<dbReference type="eggNOG" id="ENOG502QQNP">
    <property type="taxonomic scope" value="Eukaryota"/>
</dbReference>
<dbReference type="InParanoid" id="Q9WTY1"/>
<dbReference type="PhylomeDB" id="Q9WTY1"/>
<dbReference type="Reactome" id="R-MMU-72165">
    <property type="pathway name" value="mRNA Splicing - Minor Pathway"/>
</dbReference>
<dbReference type="ChiTaRS" id="Pdcd7">
    <property type="organism name" value="mouse"/>
</dbReference>
<dbReference type="PRO" id="PR:Q9WTY1"/>
<dbReference type="Proteomes" id="UP000000589">
    <property type="component" value="Unplaced"/>
</dbReference>
<dbReference type="RNAct" id="Q9WTY1">
    <property type="molecule type" value="protein"/>
</dbReference>
<dbReference type="GO" id="GO:0005681">
    <property type="term" value="C:spliceosomal complex"/>
    <property type="evidence" value="ECO:0000314"/>
    <property type="project" value="MGI"/>
</dbReference>
<dbReference type="GO" id="GO:0005689">
    <property type="term" value="C:U12-type spliceosomal complex"/>
    <property type="evidence" value="ECO:0000250"/>
    <property type="project" value="HGNC-UCL"/>
</dbReference>
<dbReference type="GO" id="GO:0089701">
    <property type="term" value="C:U2AF complex"/>
    <property type="evidence" value="ECO:0000314"/>
    <property type="project" value="MGI"/>
</dbReference>
<dbReference type="GO" id="GO:0006915">
    <property type="term" value="P:apoptotic process"/>
    <property type="evidence" value="ECO:0007669"/>
    <property type="project" value="UniProtKB-KW"/>
</dbReference>
<dbReference type="GO" id="GO:2001235">
    <property type="term" value="P:positive regulation of apoptotic signaling pathway"/>
    <property type="evidence" value="ECO:0000314"/>
    <property type="project" value="MGI"/>
</dbReference>
<dbReference type="GO" id="GO:0070234">
    <property type="term" value="P:positive regulation of T cell apoptotic process"/>
    <property type="evidence" value="ECO:0000314"/>
    <property type="project" value="MGI"/>
</dbReference>
<dbReference type="GO" id="GO:0051384">
    <property type="term" value="P:response to glucocorticoid"/>
    <property type="evidence" value="ECO:0000314"/>
    <property type="project" value="HGNC-UCL"/>
</dbReference>
<dbReference type="GO" id="GO:0008380">
    <property type="term" value="P:RNA splicing"/>
    <property type="evidence" value="ECO:0000315"/>
    <property type="project" value="MGI"/>
</dbReference>
<dbReference type="InterPro" id="IPR052831">
    <property type="entry name" value="Apoptosis_promoter"/>
</dbReference>
<dbReference type="InterPro" id="IPR031974">
    <property type="entry name" value="PDCD7"/>
</dbReference>
<dbReference type="PANTHER" id="PTHR48190">
    <property type="entry name" value="PROGRAMMED CELL DEATH PROTEIN 7"/>
    <property type="match status" value="1"/>
</dbReference>
<dbReference type="PANTHER" id="PTHR48190:SF2">
    <property type="entry name" value="PROGRAMMED CELL DEATH PROTEIN 7"/>
    <property type="match status" value="1"/>
</dbReference>
<dbReference type="Pfam" id="PF16021">
    <property type="entry name" value="PDCD7"/>
    <property type="match status" value="1"/>
</dbReference>
<organism>
    <name type="scientific">Mus musculus</name>
    <name type="common">Mouse</name>
    <dbReference type="NCBI Taxonomy" id="10090"/>
    <lineage>
        <taxon>Eukaryota</taxon>
        <taxon>Metazoa</taxon>
        <taxon>Chordata</taxon>
        <taxon>Craniata</taxon>
        <taxon>Vertebrata</taxon>
        <taxon>Euteleostomi</taxon>
        <taxon>Mammalia</taxon>
        <taxon>Eutheria</taxon>
        <taxon>Euarchontoglires</taxon>
        <taxon>Glires</taxon>
        <taxon>Rodentia</taxon>
        <taxon>Myomorpha</taxon>
        <taxon>Muroidea</taxon>
        <taxon>Muridae</taxon>
        <taxon>Murinae</taxon>
        <taxon>Mus</taxon>
        <taxon>Mus</taxon>
    </lineage>
</organism>
<sequence>MALPPFFAQSRQGPPPPQPPPSAPFGCPPPPLPSPAFPPPLPQRPGPFPGASAPFLQPPLALQPRAPAEASRGGGGGGAFFPVPPPPLPPPPPQCRPFPGPDAVERPRPPPPGPGPPWSPRWAEAPPPPDVLGDAALQRLRDRQWLEAVFGNPRRPGGLRTPRTPAGPSLGEVRARLRSALRLVRRLRSLGQSLREAEADGAAWASLHAQAAPLRAELAERLQPLRQAAYVGEARRRLERVRRRVRVRERARDRRLSGRRGAQRTEREQEIDRWRVKCVQEVEEKKRDEELKAAADGVLAEVRKKQSDTKRMVDILRALEKLRKLRKEAAARKGVCPPASADETFEHHLQRLRKLIKKRSELYEAEERALRVMLEGEQEEERRRELEKKQRKEKEKLLLQKREIESKLFGDPDEFPLAHLLQPFRQYYLQAEHSLPALIQIRHDWDQYLVPSDHPKGNSVPQGWVLPPLPSNDIWATAIQLH</sequence>